<feature type="signal peptide" evidence="1">
    <location>
        <begin position="1"/>
        <end position="32"/>
    </location>
</feature>
<feature type="chain" id="PRO_0000068961" description="5-hydroxytryptamine receptor 2C">
    <location>
        <begin position="33"/>
        <end position="460"/>
    </location>
</feature>
<feature type="topological domain" description="Extracellular" evidence="1">
    <location>
        <begin position="33"/>
        <end position="56"/>
    </location>
</feature>
<feature type="transmembrane region" description="Helical; Name=1" evidence="1">
    <location>
        <begin position="57"/>
        <end position="81"/>
    </location>
</feature>
<feature type="topological domain" description="Cytoplasmic" evidence="1">
    <location>
        <begin position="82"/>
        <end position="87"/>
    </location>
</feature>
<feature type="transmembrane region" description="Helical; Name=2" evidence="1">
    <location>
        <begin position="88"/>
        <end position="112"/>
    </location>
</feature>
<feature type="topological domain" description="Extracellular" evidence="1">
    <location>
        <begin position="113"/>
        <end position="129"/>
    </location>
</feature>
<feature type="transmembrane region" description="Helical; Name=3" evidence="1">
    <location>
        <begin position="130"/>
        <end position="152"/>
    </location>
</feature>
<feature type="topological domain" description="Cytoplasmic" evidence="1">
    <location>
        <begin position="153"/>
        <end position="168"/>
    </location>
</feature>
<feature type="transmembrane region" description="Helical; Name=4" evidence="1">
    <location>
        <begin position="169"/>
        <end position="190"/>
    </location>
</feature>
<feature type="topological domain" description="Extracellular" evidence="1">
    <location>
        <begin position="191"/>
        <end position="214"/>
    </location>
</feature>
<feature type="transmembrane region" description="Helical; Name=5" evidence="1">
    <location>
        <begin position="215"/>
        <end position="237"/>
    </location>
</feature>
<feature type="topological domain" description="Cytoplasmic" evidence="1">
    <location>
        <begin position="238"/>
        <end position="313"/>
    </location>
</feature>
<feature type="transmembrane region" description="Helical; Name=6" evidence="1">
    <location>
        <begin position="314"/>
        <end position="338"/>
    </location>
</feature>
<feature type="topological domain" description="Extracellular" evidence="1">
    <location>
        <begin position="339"/>
        <end position="349"/>
    </location>
</feature>
<feature type="transmembrane region" description="Helical; Name=7" evidence="1">
    <location>
        <begin position="350"/>
        <end position="372"/>
    </location>
</feature>
<feature type="topological domain" description="Cytoplasmic" evidence="1">
    <location>
        <begin position="373"/>
        <end position="460"/>
    </location>
</feature>
<feature type="region of interest" description="Disordered" evidence="6">
    <location>
        <begin position="276"/>
        <end position="301"/>
    </location>
</feature>
<feature type="short sequence motif" description="DRY motif; important for ligand-induced conformation changes" evidence="3">
    <location>
        <begin position="152"/>
        <end position="154"/>
    </location>
</feature>
<feature type="short sequence motif" description="NPxxY motif; important for ligand-induced conformation changes and signaling" evidence="3">
    <location>
        <begin position="366"/>
        <end position="370"/>
    </location>
</feature>
<feature type="short sequence motif" description="PDZ-binding">
    <location>
        <begin position="458"/>
        <end position="460"/>
    </location>
</feature>
<feature type="compositionally biased region" description="Basic residues" evidence="6">
    <location>
        <begin position="289"/>
        <end position="299"/>
    </location>
</feature>
<feature type="binding site" evidence="1">
    <location>
        <position position="140"/>
    </location>
    <ligand>
        <name>ergotamine</name>
        <dbReference type="ChEBI" id="CHEBI:190463"/>
        <note>agonist</note>
    </ligand>
</feature>
<feature type="binding site" evidence="1">
    <location>
        <position position="210"/>
    </location>
    <ligand>
        <name>ergotamine</name>
        <dbReference type="ChEBI" id="CHEBI:190463"/>
        <note>agonist</note>
    </ligand>
</feature>
<feature type="glycosylation site" description="N-linked (GlcNAc...) asparagine" evidence="4">
    <location>
        <position position="204"/>
    </location>
</feature>
<feature type="glycosylation site" description="N-linked (GlcNAc...) asparagine" evidence="4">
    <location>
        <position position="205"/>
    </location>
</feature>
<feature type="disulfide bond" evidence="5">
    <location>
        <begin position="128"/>
        <end position="208"/>
    </location>
</feature>
<feature type="disulfide bond" evidence="5">
    <location>
        <begin position="339"/>
        <end position="343"/>
    </location>
</feature>
<feature type="mutagenesis site" description="Loss of interaction with MPDZ." evidence="7">
    <original>S</original>
    <variation>A</variation>
    <variation>D</variation>
    <location>
        <position position="458"/>
    </location>
</feature>
<feature type="mutagenesis site" description="No effect on interaction with MPDZ." evidence="7">
    <original>S</original>
    <variation>D</variation>
    <location>
        <position position="459"/>
    </location>
</feature>
<name>5HT2C_RAT</name>
<dbReference type="EMBL" id="M21410">
    <property type="protein sequence ID" value="AAA42177.1"/>
    <property type="molecule type" value="Genomic_DNA"/>
</dbReference>
<dbReference type="PIR" id="A32605">
    <property type="entry name" value="A32605"/>
</dbReference>
<dbReference type="RefSeq" id="NP_036897.2">
    <property type="nucleotide sequence ID" value="NM_012765.3"/>
</dbReference>
<dbReference type="PDB" id="2MHO">
    <property type="method" value="NMR"/>
    <property type="chains" value="B=452-460"/>
</dbReference>
<dbReference type="PDBsum" id="2MHO"/>
<dbReference type="BMRB" id="P08909"/>
<dbReference type="SMR" id="P08909"/>
<dbReference type="CORUM" id="P08909"/>
<dbReference type="FunCoup" id="P08909">
    <property type="interactions" value="347"/>
</dbReference>
<dbReference type="IntAct" id="P08909">
    <property type="interactions" value="1"/>
</dbReference>
<dbReference type="MINT" id="P08909"/>
<dbReference type="STRING" id="10116.ENSRNOP00000070471"/>
<dbReference type="BindingDB" id="P08909"/>
<dbReference type="ChEMBL" id="CHEMBL324"/>
<dbReference type="DrugBank" id="DB00321">
    <property type="generic name" value="Amitriptyline"/>
</dbReference>
<dbReference type="DrugBank" id="DB00540">
    <property type="generic name" value="Nortriptyline"/>
</dbReference>
<dbReference type="DrugBank" id="DB00935">
    <property type="generic name" value="Oxymetazoline"/>
</dbReference>
<dbReference type="DrugBank" id="DB00656">
    <property type="generic name" value="Trazodone"/>
</dbReference>
<dbReference type="DrugBank" id="DB00726">
    <property type="generic name" value="Trimipramine"/>
</dbReference>
<dbReference type="DrugCentral" id="P08909"/>
<dbReference type="GuidetoPHARMACOLOGY" id="8"/>
<dbReference type="GlyCosmos" id="P08909">
    <property type="glycosylation" value="3 sites, No reported glycans"/>
</dbReference>
<dbReference type="GlyGen" id="P08909">
    <property type="glycosylation" value="3 sites"/>
</dbReference>
<dbReference type="iPTMnet" id="P08909"/>
<dbReference type="PhosphoSitePlus" id="P08909"/>
<dbReference type="PaxDb" id="10116-ENSRNOP00000060345"/>
<dbReference type="Ensembl" id="ENSRNOT00000065293.3">
    <property type="protein sequence ID" value="ENSRNOP00000060345.3"/>
    <property type="gene ID" value="ENSRNOG00000030877.6"/>
</dbReference>
<dbReference type="GeneID" id="25187"/>
<dbReference type="KEGG" id="rno:25187"/>
<dbReference type="AGR" id="RGD:2848"/>
<dbReference type="CTD" id="3358"/>
<dbReference type="RGD" id="2848">
    <property type="gene designation" value="Htr2c"/>
</dbReference>
<dbReference type="eggNOG" id="KOG3656">
    <property type="taxonomic scope" value="Eukaryota"/>
</dbReference>
<dbReference type="GeneTree" id="ENSGT00940000161671"/>
<dbReference type="InParanoid" id="P08909"/>
<dbReference type="OrthoDB" id="67742at9989"/>
<dbReference type="PhylomeDB" id="P08909"/>
<dbReference type="Reactome" id="R-RNO-390666">
    <property type="pathway name" value="Serotonin receptors"/>
</dbReference>
<dbReference type="Reactome" id="R-RNO-416476">
    <property type="pathway name" value="G alpha (q) signalling events"/>
</dbReference>
<dbReference type="EvolutionaryTrace" id="P08909"/>
<dbReference type="PRO" id="PR:P08909"/>
<dbReference type="Proteomes" id="UP000002494">
    <property type="component" value="Chromosome X"/>
</dbReference>
<dbReference type="GO" id="GO:0009986">
    <property type="term" value="C:cell surface"/>
    <property type="evidence" value="ECO:0000314"/>
    <property type="project" value="RGD"/>
</dbReference>
<dbReference type="GO" id="GO:0030425">
    <property type="term" value="C:dendrite"/>
    <property type="evidence" value="ECO:0000318"/>
    <property type="project" value="GO_Central"/>
</dbReference>
<dbReference type="GO" id="GO:0009897">
    <property type="term" value="C:external side of plasma membrane"/>
    <property type="evidence" value="ECO:0000314"/>
    <property type="project" value="MGI"/>
</dbReference>
<dbReference type="GO" id="GO:0098666">
    <property type="term" value="C:G protein-coupled serotonin receptor complex"/>
    <property type="evidence" value="ECO:0000266"/>
    <property type="project" value="RGD"/>
</dbReference>
<dbReference type="GO" id="GO:0005886">
    <property type="term" value="C:plasma membrane"/>
    <property type="evidence" value="ECO:0000250"/>
    <property type="project" value="UniProtKB"/>
</dbReference>
<dbReference type="GO" id="GO:0045202">
    <property type="term" value="C:synapse"/>
    <property type="evidence" value="ECO:0007669"/>
    <property type="project" value="GOC"/>
</dbReference>
<dbReference type="GO" id="GO:0071886">
    <property type="term" value="F:1-(4-iodo-2,5-dimethoxyphenyl)propan-2-amine binding"/>
    <property type="evidence" value="ECO:0000266"/>
    <property type="project" value="RGD"/>
</dbReference>
<dbReference type="GO" id="GO:0004993">
    <property type="term" value="F:G protein-coupled serotonin receptor activity"/>
    <property type="evidence" value="ECO:0000315"/>
    <property type="project" value="RGD"/>
</dbReference>
<dbReference type="GO" id="GO:0001587">
    <property type="term" value="F:Gq/11-coupled serotonin receptor activity"/>
    <property type="evidence" value="ECO:0000250"/>
    <property type="project" value="UniProtKB"/>
</dbReference>
<dbReference type="GO" id="GO:0042802">
    <property type="term" value="F:identical protein binding"/>
    <property type="evidence" value="ECO:0000266"/>
    <property type="project" value="RGD"/>
</dbReference>
<dbReference type="GO" id="GO:0030594">
    <property type="term" value="F:neurotransmitter receptor activity"/>
    <property type="evidence" value="ECO:0000318"/>
    <property type="project" value="GO_Central"/>
</dbReference>
<dbReference type="GO" id="GO:0051378">
    <property type="term" value="F:serotonin binding"/>
    <property type="evidence" value="ECO:0000266"/>
    <property type="project" value="RGD"/>
</dbReference>
<dbReference type="GO" id="GO:0099589">
    <property type="term" value="F:serotonin receptor activity"/>
    <property type="evidence" value="ECO:0000266"/>
    <property type="project" value="RGD"/>
</dbReference>
<dbReference type="GO" id="GO:0031100">
    <property type="term" value="P:animal organ regeneration"/>
    <property type="evidence" value="ECO:0000270"/>
    <property type="project" value="RGD"/>
</dbReference>
<dbReference type="GO" id="GO:0001662">
    <property type="term" value="P:behavioral fear response"/>
    <property type="evidence" value="ECO:0000250"/>
    <property type="project" value="UniProtKB"/>
</dbReference>
<dbReference type="GO" id="GO:0035095">
    <property type="term" value="P:behavioral response to nicotine"/>
    <property type="evidence" value="ECO:0000315"/>
    <property type="project" value="RGD"/>
</dbReference>
<dbReference type="GO" id="GO:0019934">
    <property type="term" value="P:cGMP-mediated signaling"/>
    <property type="evidence" value="ECO:0000266"/>
    <property type="project" value="RGD"/>
</dbReference>
<dbReference type="GO" id="GO:0007268">
    <property type="term" value="P:chemical synaptic transmission"/>
    <property type="evidence" value="ECO:0000318"/>
    <property type="project" value="GO_Central"/>
</dbReference>
<dbReference type="GO" id="GO:0007631">
    <property type="term" value="P:feeding behavior"/>
    <property type="evidence" value="ECO:0000315"/>
    <property type="project" value="RGD"/>
</dbReference>
<dbReference type="GO" id="GO:0007187">
    <property type="term" value="P:G protein-coupled receptor signaling pathway, coupled to cyclic nucleotide second messenger"/>
    <property type="evidence" value="ECO:0000318"/>
    <property type="project" value="GO_Central"/>
</dbReference>
<dbReference type="GO" id="GO:0098664">
    <property type="term" value="P:G protein-coupled serotonin receptor signaling pathway"/>
    <property type="evidence" value="ECO:0000266"/>
    <property type="project" value="RGD"/>
</dbReference>
<dbReference type="GO" id="GO:0006874">
    <property type="term" value="P:intracellular calcium ion homeostasis"/>
    <property type="evidence" value="ECO:0000266"/>
    <property type="project" value="RGD"/>
</dbReference>
<dbReference type="GO" id="GO:0007626">
    <property type="term" value="P:locomotory behavior"/>
    <property type="evidence" value="ECO:0007669"/>
    <property type="project" value="InterPro"/>
</dbReference>
<dbReference type="GO" id="GO:0045963">
    <property type="term" value="P:negative regulation of dopamine metabolic process"/>
    <property type="evidence" value="ECO:0000315"/>
    <property type="project" value="RGD"/>
</dbReference>
<dbReference type="GO" id="GO:0007200">
    <property type="term" value="P:phospholipase C-activating G protein-coupled receptor signaling pathway"/>
    <property type="evidence" value="ECO:0000250"/>
    <property type="project" value="UniProtKB"/>
</dbReference>
<dbReference type="GO" id="GO:0007208">
    <property type="term" value="P:phospholipase C-activating serotonin receptor signaling pathway"/>
    <property type="evidence" value="ECO:0000314"/>
    <property type="project" value="RGD"/>
</dbReference>
<dbReference type="GO" id="GO:0031583">
    <property type="term" value="P:phospholipase D-activating G protein-coupled receptor signaling pathway"/>
    <property type="evidence" value="ECO:0000315"/>
    <property type="project" value="RGD"/>
</dbReference>
<dbReference type="GO" id="GO:0014057">
    <property type="term" value="P:positive regulation of acetylcholine secretion, neurotransmission"/>
    <property type="evidence" value="ECO:0000315"/>
    <property type="project" value="RGD"/>
</dbReference>
<dbReference type="GO" id="GO:0050850">
    <property type="term" value="P:positive regulation of calcium-mediated signaling"/>
    <property type="evidence" value="ECO:0000266"/>
    <property type="project" value="RGD"/>
</dbReference>
<dbReference type="GO" id="GO:0070374">
    <property type="term" value="P:positive regulation of ERK1 and ERK2 cascade"/>
    <property type="evidence" value="ECO:0000266"/>
    <property type="project" value="RGD"/>
</dbReference>
<dbReference type="GO" id="GO:0045600">
    <property type="term" value="P:positive regulation of fat cell differentiation"/>
    <property type="evidence" value="ECO:0000266"/>
    <property type="project" value="RGD"/>
</dbReference>
<dbReference type="GO" id="GO:0014054">
    <property type="term" value="P:positive regulation of gamma-aminobutyric acid secretion"/>
    <property type="evidence" value="ECO:0000315"/>
    <property type="project" value="RGD"/>
</dbReference>
<dbReference type="GO" id="GO:0010513">
    <property type="term" value="P:positive regulation of phosphatidylinositol biosynthetic process"/>
    <property type="evidence" value="ECO:0000266"/>
    <property type="project" value="RGD"/>
</dbReference>
<dbReference type="GO" id="GO:0045907">
    <property type="term" value="P:positive regulation of vasoconstriction"/>
    <property type="evidence" value="ECO:0000315"/>
    <property type="project" value="RGD"/>
</dbReference>
<dbReference type="GO" id="GO:0032098">
    <property type="term" value="P:regulation of appetite"/>
    <property type="evidence" value="ECO:0000250"/>
    <property type="project" value="UniProtKB"/>
</dbReference>
<dbReference type="GO" id="GO:0043397">
    <property type="term" value="P:regulation of corticotropin-releasing hormone secretion"/>
    <property type="evidence" value="ECO:0000250"/>
    <property type="project" value="UniProtKB"/>
</dbReference>
<dbReference type="GO" id="GO:0031644">
    <property type="term" value="P:regulation of nervous system process"/>
    <property type="evidence" value="ECO:0000250"/>
    <property type="project" value="UniProtKB"/>
</dbReference>
<dbReference type="GO" id="GO:0051209">
    <property type="term" value="P:release of sequestered calcium ion into cytosol"/>
    <property type="evidence" value="ECO:0000266"/>
    <property type="project" value="RGD"/>
</dbReference>
<dbReference type="GO" id="GO:0009410">
    <property type="term" value="P:response to xenobiotic stimulus"/>
    <property type="evidence" value="ECO:0000315"/>
    <property type="project" value="RGD"/>
</dbReference>
<dbReference type="GO" id="GO:0046960">
    <property type="term" value="P:sensitization"/>
    <property type="evidence" value="ECO:0000315"/>
    <property type="project" value="RGD"/>
</dbReference>
<dbReference type="GO" id="GO:0007210">
    <property type="term" value="P:serotonin receptor signaling pathway"/>
    <property type="evidence" value="ECO:0000318"/>
    <property type="project" value="GO_Central"/>
</dbReference>
<dbReference type="CDD" id="cd15305">
    <property type="entry name" value="7tmA_5-HT2C"/>
    <property type="match status" value="1"/>
</dbReference>
<dbReference type="Gene3D" id="1.20.1070.10">
    <property type="entry name" value="Rhodopsin 7-helix transmembrane proteins"/>
    <property type="match status" value="1"/>
</dbReference>
<dbReference type="InterPro" id="IPR000377">
    <property type="entry name" value="5HT2C_rcpt"/>
</dbReference>
<dbReference type="InterPro" id="IPR002231">
    <property type="entry name" value="5HT_rcpt"/>
</dbReference>
<dbReference type="InterPro" id="IPR000276">
    <property type="entry name" value="GPCR_Rhodpsn"/>
</dbReference>
<dbReference type="InterPro" id="IPR017452">
    <property type="entry name" value="GPCR_Rhodpsn_7TM"/>
</dbReference>
<dbReference type="PANTHER" id="PTHR24247">
    <property type="entry name" value="5-HYDROXYTRYPTAMINE RECEPTOR"/>
    <property type="match status" value="1"/>
</dbReference>
<dbReference type="PANTHER" id="PTHR24247:SF32">
    <property type="entry name" value="5-HYDROXYTRYPTAMINE RECEPTOR 2C"/>
    <property type="match status" value="1"/>
</dbReference>
<dbReference type="Pfam" id="PF00001">
    <property type="entry name" value="7tm_1"/>
    <property type="match status" value="1"/>
</dbReference>
<dbReference type="PRINTS" id="PR00517">
    <property type="entry name" value="5HT2CRECEPTR"/>
</dbReference>
<dbReference type="PRINTS" id="PR01101">
    <property type="entry name" value="5HTRECEPTOR"/>
</dbReference>
<dbReference type="PRINTS" id="PR00237">
    <property type="entry name" value="GPCRRHODOPSN"/>
</dbReference>
<dbReference type="SMART" id="SM01381">
    <property type="entry name" value="7TM_GPCR_Srsx"/>
    <property type="match status" value="1"/>
</dbReference>
<dbReference type="SUPFAM" id="SSF81321">
    <property type="entry name" value="Family A G protein-coupled receptor-like"/>
    <property type="match status" value="1"/>
</dbReference>
<dbReference type="PROSITE" id="PS00237">
    <property type="entry name" value="G_PROTEIN_RECEP_F1_1"/>
    <property type="match status" value="1"/>
</dbReference>
<dbReference type="PROSITE" id="PS50262">
    <property type="entry name" value="G_PROTEIN_RECEP_F1_2"/>
    <property type="match status" value="1"/>
</dbReference>
<protein>
    <recommendedName>
        <fullName evidence="9">5-hydroxytryptamine receptor 2C</fullName>
        <shortName>5-HT-2C</shortName>
        <shortName>5-HT2C</shortName>
        <shortName>5-HTR2C</shortName>
    </recommendedName>
    <alternativeName>
        <fullName>5-hydroxytryptamine receptor 1C</fullName>
        <shortName>5-HT-1C</shortName>
        <shortName>5-HT1C</shortName>
    </alternativeName>
    <alternativeName>
        <fullName>Serotonin receptor 2C</fullName>
    </alternativeName>
</protein>
<proteinExistence type="evidence at protein level"/>
<evidence type="ECO:0000250" key="1">
    <source>
        <dbReference type="UniProtKB" id="P28335"/>
    </source>
</evidence>
<evidence type="ECO:0000250" key="2">
    <source>
        <dbReference type="UniProtKB" id="P34968"/>
    </source>
</evidence>
<evidence type="ECO:0000250" key="3">
    <source>
        <dbReference type="UniProtKB" id="P41595"/>
    </source>
</evidence>
<evidence type="ECO:0000255" key="4"/>
<evidence type="ECO:0000255" key="5">
    <source>
        <dbReference type="PROSITE-ProRule" id="PRU00521"/>
    </source>
</evidence>
<evidence type="ECO:0000256" key="6">
    <source>
        <dbReference type="SAM" id="MobiDB-lite"/>
    </source>
</evidence>
<evidence type="ECO:0000269" key="7">
    <source>
    </source>
</evidence>
<evidence type="ECO:0000269" key="8">
    <source>
    </source>
</evidence>
<evidence type="ECO:0000305" key="9"/>
<evidence type="ECO:0000312" key="10">
    <source>
        <dbReference type="RGD" id="2848"/>
    </source>
</evidence>
<accession>P08909</accession>
<comment type="function">
    <text evidence="1 2 8">G-protein coupled receptor for 5-hydroxytryptamine (serotonin) (PubMed:3399891). Also functions as a receptor for various drugs and psychoactive substances, including ergot alkaloid derivatives, 1-2,5,-dimethoxy-4-iodophenyl-2-aminopropane (DOI) and lysergic acid diethylamide (LSD) (By similarity). Ligand binding causes a conformation change that triggers signaling via guanine nucleotide-binding proteins (G proteins) and modulates the activity of downstream effectors (By similarity). HTR2C is coupled to G(q)/G(11) G alpha proteins and activates phospholipase C-beta, releasing diacylglycerol (DAG) and inositol 1,4,5-trisphosphate (IP3) second messengers that modulate the activity of phosphatidylinositol 3-kinase and promote the release of Ca(2+) ions from intracellular stores, respectively (By similarity). Beta-arrestin family members inhibit signaling via G proteins and mediate activation of alternative signaling pathways (By similarity). Regulates neuronal activity via the activation of short transient receptor potential calcium channels in the brain, and thereby modulates the activation of pro-opiomelanocortin neurons and the release of CRH that then regulates the release of corticosterone (By similarity). Plays a role in the regulation of appetite and eating behavior, responses to anxiogenic stimuli and stress (By similarity). Plays a role in insulin sensitivity and glucose homeostasis (By similarity).</text>
</comment>
<comment type="subunit">
    <text evidence="1 7">Interacts with MPDZ (PubMed:12682077). Interacts with ARRB2 (By similarity). Interacts with MPP3; this interaction stabilizes the receptor at the plasma membrane and prevents the desensitization of the HTR2C receptor-mediated calcium response (By similarity).</text>
</comment>
<comment type="subcellular location">
    <subcellularLocation>
        <location evidence="8">Cell membrane</location>
        <topology evidence="4">Multi-pass membrane protein</topology>
    </subcellularLocation>
</comment>
<comment type="domain">
    <text evidence="1">The PDZ domain-binding motif is involved in the interaction with MPDZ.</text>
</comment>
<comment type="similarity">
    <text evidence="5">Belongs to the G-protein coupled receptor 1 family.</text>
</comment>
<keyword id="KW-0002">3D-structure</keyword>
<keyword id="KW-0085">Behavior</keyword>
<keyword id="KW-1003">Cell membrane</keyword>
<keyword id="KW-1015">Disulfide bond</keyword>
<keyword id="KW-0297">G-protein coupled receptor</keyword>
<keyword id="KW-0325">Glycoprotein</keyword>
<keyword id="KW-0472">Membrane</keyword>
<keyword id="KW-0675">Receptor</keyword>
<keyword id="KW-1185">Reference proteome</keyword>
<keyword id="KW-0732">Signal</keyword>
<keyword id="KW-0807">Transducer</keyword>
<keyword id="KW-0812">Transmembrane</keyword>
<keyword id="KW-1133">Transmembrane helix</keyword>
<organism>
    <name type="scientific">Rattus norvegicus</name>
    <name type="common">Rat</name>
    <dbReference type="NCBI Taxonomy" id="10116"/>
    <lineage>
        <taxon>Eukaryota</taxon>
        <taxon>Metazoa</taxon>
        <taxon>Chordata</taxon>
        <taxon>Craniata</taxon>
        <taxon>Vertebrata</taxon>
        <taxon>Euteleostomi</taxon>
        <taxon>Mammalia</taxon>
        <taxon>Eutheria</taxon>
        <taxon>Euarchontoglires</taxon>
        <taxon>Glires</taxon>
        <taxon>Rodentia</taxon>
        <taxon>Myomorpha</taxon>
        <taxon>Muroidea</taxon>
        <taxon>Muridae</taxon>
        <taxon>Murinae</taxon>
        <taxon>Rattus</taxon>
    </lineage>
</organism>
<gene>
    <name evidence="10" type="primary">Htr2c</name>
    <name type="synonym">5ht1c</name>
    <name type="synonym">Htr1c</name>
</gene>
<sequence>MVNLGNAVRSLLMHLIGLLVWQFDISISPVAAIVTDTFNSSDGGRLFQFPDGVQNWPALSIVVIIIMTIGGNILVIMAVSMEKKLHNATNYFLMSLAIADMLVGLLVMPLSLLAILYDYVWPLPRYLCPVWISLDVLFSTASIMHLCAISLDRYVAIRNPIEHSRFNSRTKAIMKIAIVWAISIGVSVPIPVIGLRDESKVFVNNTTCVLNDPNFVLIGSFVAFFIPLTIMVITYFLTIYVLRRQTLMLLRGHTEEELANMSLNFLNCCCKKNGGEEENAPNPNPDQKPRRKKKEKRPRGTMQAINNEKKASKVLGIVFFVFLIMWCPFFITNILSVLCGKACNQKLMEKLLNVFVWIGYVCSGINPLVYTLFNKIYRRAFSKYLRCDYKPDKKPPVRQIPRVAATALSGRELNVNIYRHTNERVARKANDPEPGIEMQVENLELPVNPSNVVSERISSV</sequence>
<reference key="1">
    <citation type="journal article" date="1988" name="Science">
        <title>Molecular characterization of a functional cDNA encoding the serotonin 1c receptor.</title>
        <authorList>
            <person name="Julius D."/>
            <person name="McDermott A.B."/>
            <person name="Axel R."/>
            <person name="Jessell T.M."/>
        </authorList>
    </citation>
    <scope>NUCLEOTIDE SEQUENCE [GENOMIC DNA]</scope>
    <scope>FUNCTION</scope>
    <scope>SUBCELLULAR LOCATION</scope>
</reference>
<reference key="2">
    <citation type="journal article" date="2003" name="J. Biol. Chem.">
        <title>Agonist-induced phosphorylation of the serotonin 5-HT2C receptor regulates its interaction with multiple PDZ protein 1.</title>
        <authorList>
            <person name="Parker L.L."/>
            <person name="Backstrom J.R."/>
            <person name="Sanders-Bush E."/>
            <person name="Shieh B.H."/>
        </authorList>
    </citation>
    <scope>INTERACTION WITH MPDZ</scope>
    <scope>MUTAGENESIS OF SER-458 AND SER-459</scope>
</reference>